<feature type="chain" id="PRO_0000307277" description="Testis-specific Y-encoded-like protein 5">
    <location>
        <begin position="1"/>
        <end position="417"/>
    </location>
</feature>
<feature type="region of interest" description="Disordered" evidence="1">
    <location>
        <begin position="1"/>
        <end position="55"/>
    </location>
</feature>
<feature type="region of interest" description="Disordered" evidence="1">
    <location>
        <begin position="93"/>
        <end position="112"/>
    </location>
</feature>
<feature type="region of interest" description="Disordered" evidence="1">
    <location>
        <begin position="127"/>
        <end position="202"/>
    </location>
</feature>
<feature type="region of interest" description="Disordered" evidence="1">
    <location>
        <begin position="391"/>
        <end position="417"/>
    </location>
</feature>
<feature type="compositionally biased region" description="Basic residues" evidence="1">
    <location>
        <begin position="1"/>
        <end position="25"/>
    </location>
</feature>
<feature type="compositionally biased region" description="Basic and acidic residues" evidence="1">
    <location>
        <begin position="27"/>
        <end position="37"/>
    </location>
</feature>
<feature type="compositionally biased region" description="Low complexity" evidence="1">
    <location>
        <begin position="93"/>
        <end position="103"/>
    </location>
</feature>
<feature type="compositionally biased region" description="Basic and acidic residues" evidence="1">
    <location>
        <begin position="182"/>
        <end position="191"/>
    </location>
</feature>
<feature type="compositionally biased region" description="Polar residues" evidence="1">
    <location>
        <begin position="406"/>
        <end position="417"/>
    </location>
</feature>
<feature type="sequence variant" id="VAR_035393" description="In dbSNP:rs2635164.">
    <original>T</original>
    <variation>S</variation>
    <location>
        <position position="120"/>
    </location>
</feature>
<feature type="sequence variant" id="VAR_035394" description="In dbSNP:rs17854366." evidence="2">
    <original>I</original>
    <variation>V</variation>
    <location>
        <position position="365"/>
    </location>
</feature>
<organism>
    <name type="scientific">Homo sapiens</name>
    <name type="common">Human</name>
    <dbReference type="NCBI Taxonomy" id="9606"/>
    <lineage>
        <taxon>Eukaryota</taxon>
        <taxon>Metazoa</taxon>
        <taxon>Chordata</taxon>
        <taxon>Craniata</taxon>
        <taxon>Vertebrata</taxon>
        <taxon>Euteleostomi</taxon>
        <taxon>Mammalia</taxon>
        <taxon>Eutheria</taxon>
        <taxon>Euarchontoglires</taxon>
        <taxon>Primates</taxon>
        <taxon>Haplorrhini</taxon>
        <taxon>Catarrhini</taxon>
        <taxon>Hominidae</taxon>
        <taxon>Homo</taxon>
    </lineage>
</organism>
<gene>
    <name type="primary">TSPYL5</name>
    <name type="synonym">KIAA1750</name>
</gene>
<keyword id="KW-0341">Growth regulation</keyword>
<keyword id="KW-1267">Proteomics identification</keyword>
<keyword id="KW-1185">Reference proteome</keyword>
<reference key="1">
    <citation type="journal article" date="2000" name="DNA Res.">
        <title>Prediction of the coding sequences of unidentified human genes. XIX. The complete sequences of 100 new cDNA clones from brain which code for large proteins in vitro.</title>
        <authorList>
            <person name="Nagase T."/>
            <person name="Kikuno R."/>
            <person name="Hattori A."/>
            <person name="Kondo Y."/>
            <person name="Okumura K."/>
            <person name="Ohara O."/>
        </authorList>
    </citation>
    <scope>NUCLEOTIDE SEQUENCE [LARGE SCALE MRNA]</scope>
    <source>
        <tissue>Brain</tissue>
    </source>
</reference>
<reference key="2">
    <citation type="journal article" date="2004" name="Nat. Genet.">
        <title>Complete sequencing and characterization of 21,243 full-length human cDNAs.</title>
        <authorList>
            <person name="Ota T."/>
            <person name="Suzuki Y."/>
            <person name="Nishikawa T."/>
            <person name="Otsuki T."/>
            <person name="Sugiyama T."/>
            <person name="Irie R."/>
            <person name="Wakamatsu A."/>
            <person name="Hayashi K."/>
            <person name="Sato H."/>
            <person name="Nagai K."/>
            <person name="Kimura K."/>
            <person name="Makita H."/>
            <person name="Sekine M."/>
            <person name="Obayashi M."/>
            <person name="Nishi T."/>
            <person name="Shibahara T."/>
            <person name="Tanaka T."/>
            <person name="Ishii S."/>
            <person name="Yamamoto J."/>
            <person name="Saito K."/>
            <person name="Kawai Y."/>
            <person name="Isono Y."/>
            <person name="Nakamura Y."/>
            <person name="Nagahari K."/>
            <person name="Murakami K."/>
            <person name="Yasuda T."/>
            <person name="Iwayanagi T."/>
            <person name="Wagatsuma M."/>
            <person name="Shiratori A."/>
            <person name="Sudo H."/>
            <person name="Hosoiri T."/>
            <person name="Kaku Y."/>
            <person name="Kodaira H."/>
            <person name="Kondo H."/>
            <person name="Sugawara M."/>
            <person name="Takahashi M."/>
            <person name="Kanda K."/>
            <person name="Yokoi T."/>
            <person name="Furuya T."/>
            <person name="Kikkawa E."/>
            <person name="Omura Y."/>
            <person name="Abe K."/>
            <person name="Kamihara K."/>
            <person name="Katsuta N."/>
            <person name="Sato K."/>
            <person name="Tanikawa M."/>
            <person name="Yamazaki M."/>
            <person name="Ninomiya K."/>
            <person name="Ishibashi T."/>
            <person name="Yamashita H."/>
            <person name="Murakawa K."/>
            <person name="Fujimori K."/>
            <person name="Tanai H."/>
            <person name="Kimata M."/>
            <person name="Watanabe M."/>
            <person name="Hiraoka S."/>
            <person name="Chiba Y."/>
            <person name="Ishida S."/>
            <person name="Ono Y."/>
            <person name="Takiguchi S."/>
            <person name="Watanabe S."/>
            <person name="Yosida M."/>
            <person name="Hotuta T."/>
            <person name="Kusano J."/>
            <person name="Kanehori K."/>
            <person name="Takahashi-Fujii A."/>
            <person name="Hara H."/>
            <person name="Tanase T.-O."/>
            <person name="Nomura Y."/>
            <person name="Togiya S."/>
            <person name="Komai F."/>
            <person name="Hara R."/>
            <person name="Takeuchi K."/>
            <person name="Arita M."/>
            <person name="Imose N."/>
            <person name="Musashino K."/>
            <person name="Yuuki H."/>
            <person name="Oshima A."/>
            <person name="Sasaki N."/>
            <person name="Aotsuka S."/>
            <person name="Yoshikawa Y."/>
            <person name="Matsunawa H."/>
            <person name="Ichihara T."/>
            <person name="Shiohata N."/>
            <person name="Sano S."/>
            <person name="Moriya S."/>
            <person name="Momiyama H."/>
            <person name="Satoh N."/>
            <person name="Takami S."/>
            <person name="Terashima Y."/>
            <person name="Suzuki O."/>
            <person name="Nakagawa S."/>
            <person name="Senoh A."/>
            <person name="Mizoguchi H."/>
            <person name="Goto Y."/>
            <person name="Shimizu F."/>
            <person name="Wakebe H."/>
            <person name="Hishigaki H."/>
            <person name="Watanabe T."/>
            <person name="Sugiyama A."/>
            <person name="Takemoto M."/>
            <person name="Kawakami B."/>
            <person name="Yamazaki M."/>
            <person name="Watanabe K."/>
            <person name="Kumagai A."/>
            <person name="Itakura S."/>
            <person name="Fukuzumi Y."/>
            <person name="Fujimori Y."/>
            <person name="Komiyama M."/>
            <person name="Tashiro H."/>
            <person name="Tanigami A."/>
            <person name="Fujiwara T."/>
            <person name="Ono T."/>
            <person name="Yamada K."/>
            <person name="Fujii Y."/>
            <person name="Ozaki K."/>
            <person name="Hirao M."/>
            <person name="Ohmori Y."/>
            <person name="Kawabata A."/>
            <person name="Hikiji T."/>
            <person name="Kobatake N."/>
            <person name="Inagaki H."/>
            <person name="Ikema Y."/>
            <person name="Okamoto S."/>
            <person name="Okitani R."/>
            <person name="Kawakami T."/>
            <person name="Noguchi S."/>
            <person name="Itoh T."/>
            <person name="Shigeta K."/>
            <person name="Senba T."/>
            <person name="Matsumura K."/>
            <person name="Nakajima Y."/>
            <person name="Mizuno T."/>
            <person name="Morinaga M."/>
            <person name="Sasaki M."/>
            <person name="Togashi T."/>
            <person name="Oyama M."/>
            <person name="Hata H."/>
            <person name="Watanabe M."/>
            <person name="Komatsu T."/>
            <person name="Mizushima-Sugano J."/>
            <person name="Satoh T."/>
            <person name="Shirai Y."/>
            <person name="Takahashi Y."/>
            <person name="Nakagawa K."/>
            <person name="Okumura K."/>
            <person name="Nagase T."/>
            <person name="Nomura N."/>
            <person name="Kikuchi H."/>
            <person name="Masuho Y."/>
            <person name="Yamashita R."/>
            <person name="Nakai K."/>
            <person name="Yada T."/>
            <person name="Nakamura Y."/>
            <person name="Ohara O."/>
            <person name="Isogai T."/>
            <person name="Sugano S."/>
        </authorList>
    </citation>
    <scope>NUCLEOTIDE SEQUENCE [LARGE SCALE MRNA]</scope>
    <source>
        <tissue>Brain</tissue>
    </source>
</reference>
<reference key="3">
    <citation type="journal article" date="2004" name="Genome Res.">
        <title>The status, quality, and expansion of the NIH full-length cDNA project: the Mammalian Gene Collection (MGC).</title>
        <authorList>
            <consortium name="The MGC Project Team"/>
        </authorList>
    </citation>
    <scope>NUCLEOTIDE SEQUENCE [LARGE SCALE MRNA]</scope>
    <scope>VARIANT VAL-365</scope>
    <source>
        <tissue>Testis</tissue>
    </source>
</reference>
<reference key="4">
    <citation type="journal article" date="2008" name="Proc. Natl. Acad. Sci. U.S.A.">
        <title>A quantitative atlas of mitotic phosphorylation.</title>
        <authorList>
            <person name="Dephoure N."/>
            <person name="Zhou C."/>
            <person name="Villen J."/>
            <person name="Beausoleil S.A."/>
            <person name="Bakalarski C.E."/>
            <person name="Elledge S.J."/>
            <person name="Gygi S.P."/>
        </authorList>
    </citation>
    <scope>IDENTIFICATION BY MASS SPECTROMETRY [LARGE SCALE ANALYSIS]</scope>
    <source>
        <tissue>Cervix carcinoma</tissue>
    </source>
</reference>
<reference key="5">
    <citation type="journal article" date="2010" name="Biochem. Biophys. Res. Commun.">
        <title>TSPYL5 is involved in cell growth and the resistance to radiation in A549 cells via the regulation of p21(WAF1/Cip1) and PTEN/AKT pathway.</title>
        <authorList>
            <person name="Kim E.J."/>
            <person name="Lee S.Y."/>
            <person name="Kim T.R."/>
            <person name="Choi S.I."/>
            <person name="Cho E.W."/>
            <person name="Kim K.C."/>
            <person name="Kim I.G."/>
        </authorList>
    </citation>
    <scope>FUNCTION</scope>
</reference>
<reference key="6">
    <citation type="journal article" date="2011" name="BMC Syst. Biol.">
        <title>Initial characterization of the human central proteome.</title>
        <authorList>
            <person name="Burkard T.R."/>
            <person name="Planyavsky M."/>
            <person name="Kaupe I."/>
            <person name="Breitwieser F.P."/>
            <person name="Buerckstuemmer T."/>
            <person name="Bennett K.L."/>
            <person name="Superti-Furga G."/>
            <person name="Colinge J."/>
        </authorList>
    </citation>
    <scope>IDENTIFICATION BY MASS SPECTROMETRY [LARGE SCALE ANALYSIS]</scope>
</reference>
<reference key="7">
    <citation type="journal article" date="2011" name="Nat. Cell Biol.">
        <title>TSPYL5 suppresses p53 levels and function by physical interaction with USP7.</title>
        <authorList>
            <person name="Epping M.T."/>
            <person name="Meijer L.A."/>
            <person name="Krijgsman O."/>
            <person name="Bos J.L."/>
            <person name="Pandolfi P.P."/>
            <person name="Bernards R."/>
        </authorList>
    </citation>
    <scope>FUNCTION</scope>
    <scope>INTERACTION WITH USP7</scope>
</reference>
<accession>Q86VY4</accession>
<accession>B3KRF0</accession>
<accession>Q9C0B3</accession>
<evidence type="ECO:0000256" key="1">
    <source>
        <dbReference type="SAM" id="MobiDB-lite"/>
    </source>
</evidence>
<evidence type="ECO:0000269" key="2">
    <source>
    </source>
</evidence>
<evidence type="ECO:0000269" key="3">
    <source>
    </source>
</evidence>
<evidence type="ECO:0000269" key="4">
    <source>
    </source>
</evidence>
<evidence type="ECO:0000305" key="5"/>
<protein>
    <recommendedName>
        <fullName>Testis-specific Y-encoded-like protein 5</fullName>
        <shortName>TSPY-like protein 5</shortName>
    </recommendedName>
</protein>
<proteinExistence type="evidence at protein level"/>
<name>TSYL5_HUMAN</name>
<sequence length="417" mass="45143">MSGRSRGRKSSRAKNRGKGRAKARVRPAPDDAPRDPDPSQYQSLGEDTQAAQVQAGAGWGGLEAAASAQLLRLGEEAACRLPLDCGLALRARAAGDHGQAAARPGPGKAASLSERLAADTVFVGTAGTVGRPKNAPRVGNRRGPAGKKAPETCSTAGRGPQVIAGGRQKKGAAGENTSVSAGEEKKEERDAGSGPPATEGSMDTLENVQLKLENMNAQADRAYLRLSRKFGQLRLQHLERRNHLIQNIPGFWGQAFQNHPQLASFLNSQEKEVLSYLNSLEVEELGLARLGYKIKFYFDRNPYFQNKVLIKEYGCGPSGQVVSRSTPIQWLPGHDLQSLSQGNPENNRSFFGWFSNHSSIESDKIVEIINEELWPNPLQFYLLSEGARVEKGKEKEGRQGPGKQPMETTQPGVSQSN</sequence>
<dbReference type="EMBL" id="AB051537">
    <property type="protein sequence ID" value="BAB21841.1"/>
    <property type="status" value="ALT_INIT"/>
    <property type="molecule type" value="mRNA"/>
</dbReference>
<dbReference type="EMBL" id="AK091445">
    <property type="protein sequence ID" value="BAG52362.1"/>
    <property type="molecule type" value="mRNA"/>
</dbReference>
<dbReference type="EMBL" id="BC045630">
    <property type="protein sequence ID" value="AAH45630.1"/>
    <property type="molecule type" value="mRNA"/>
</dbReference>
<dbReference type="CCDS" id="CCDS34927.1"/>
<dbReference type="RefSeq" id="NP_277047.2">
    <property type="nucleotide sequence ID" value="NM_033512.2"/>
</dbReference>
<dbReference type="SMR" id="Q86VY4"/>
<dbReference type="BioGRID" id="124538">
    <property type="interactions" value="52"/>
</dbReference>
<dbReference type="CORUM" id="Q86VY4"/>
<dbReference type="FunCoup" id="Q86VY4">
    <property type="interactions" value="252"/>
</dbReference>
<dbReference type="IntAct" id="Q86VY4">
    <property type="interactions" value="41"/>
</dbReference>
<dbReference type="MINT" id="Q86VY4"/>
<dbReference type="STRING" id="9606.ENSP00000322802"/>
<dbReference type="GlyGen" id="Q86VY4">
    <property type="glycosylation" value="3 sites, 1 O-linked glycan (3 sites)"/>
</dbReference>
<dbReference type="iPTMnet" id="Q86VY4"/>
<dbReference type="MetOSite" id="Q86VY4"/>
<dbReference type="PhosphoSitePlus" id="Q86VY4"/>
<dbReference type="BioMuta" id="TSPYL5"/>
<dbReference type="DMDM" id="160198165"/>
<dbReference type="jPOST" id="Q86VY4"/>
<dbReference type="MassIVE" id="Q86VY4"/>
<dbReference type="PaxDb" id="9606-ENSP00000322802"/>
<dbReference type="PeptideAtlas" id="Q86VY4"/>
<dbReference type="ProteomicsDB" id="70090"/>
<dbReference type="Pumba" id="Q86VY4"/>
<dbReference type="Antibodypedia" id="26007">
    <property type="antibodies" value="91 antibodies from 19 providers"/>
</dbReference>
<dbReference type="DNASU" id="85453"/>
<dbReference type="Ensembl" id="ENST00000322128.5">
    <property type="protein sequence ID" value="ENSP00000322802.3"/>
    <property type="gene ID" value="ENSG00000180543.5"/>
</dbReference>
<dbReference type="GeneID" id="85453"/>
<dbReference type="KEGG" id="hsa:85453"/>
<dbReference type="MANE-Select" id="ENST00000322128.5">
    <property type="protein sequence ID" value="ENSP00000322802.3"/>
    <property type="RefSeq nucleotide sequence ID" value="NM_033512.3"/>
    <property type="RefSeq protein sequence ID" value="NP_277047.2"/>
</dbReference>
<dbReference type="UCSC" id="uc003yhy.4">
    <property type="organism name" value="human"/>
</dbReference>
<dbReference type="AGR" id="HGNC:29367"/>
<dbReference type="CTD" id="85453"/>
<dbReference type="DisGeNET" id="85453"/>
<dbReference type="GeneCards" id="TSPYL5"/>
<dbReference type="HGNC" id="HGNC:29367">
    <property type="gene designation" value="TSPYL5"/>
</dbReference>
<dbReference type="HPA" id="ENSG00000180543">
    <property type="expression patterns" value="Tissue enhanced (testis)"/>
</dbReference>
<dbReference type="MIM" id="614721">
    <property type="type" value="gene"/>
</dbReference>
<dbReference type="neXtProt" id="NX_Q86VY4"/>
<dbReference type="OpenTargets" id="ENSG00000180543"/>
<dbReference type="PharmGKB" id="PA128394738"/>
<dbReference type="VEuPathDB" id="HostDB:ENSG00000180543"/>
<dbReference type="eggNOG" id="KOG1508">
    <property type="taxonomic scope" value="Eukaryota"/>
</dbReference>
<dbReference type="GeneTree" id="ENSGT00940000162862"/>
<dbReference type="HOGENOM" id="CLU_051687_2_1_1"/>
<dbReference type="InParanoid" id="Q86VY4"/>
<dbReference type="OMA" id="APETCST"/>
<dbReference type="OrthoDB" id="19419at2759"/>
<dbReference type="PAN-GO" id="Q86VY4">
    <property type="GO annotations" value="4 GO annotations based on evolutionary models"/>
</dbReference>
<dbReference type="PhylomeDB" id="Q86VY4"/>
<dbReference type="TreeFam" id="TF313386"/>
<dbReference type="PathwayCommons" id="Q86VY4"/>
<dbReference type="SignaLink" id="Q86VY4"/>
<dbReference type="BioGRID-ORCS" id="85453">
    <property type="hits" value="339 hits in 1149 CRISPR screens"/>
</dbReference>
<dbReference type="GenomeRNAi" id="85453"/>
<dbReference type="Pharos" id="Q86VY4">
    <property type="development level" value="Tbio"/>
</dbReference>
<dbReference type="PRO" id="PR:Q86VY4"/>
<dbReference type="Proteomes" id="UP000005640">
    <property type="component" value="Chromosome 8"/>
</dbReference>
<dbReference type="RNAct" id="Q86VY4">
    <property type="molecule type" value="protein"/>
</dbReference>
<dbReference type="Bgee" id="ENSG00000180543">
    <property type="expression patterns" value="Expressed in male germ line stem cell (sensu Vertebrata) in testis and 210 other cell types or tissues"/>
</dbReference>
<dbReference type="GO" id="GO:0000785">
    <property type="term" value="C:chromatin"/>
    <property type="evidence" value="ECO:0000318"/>
    <property type="project" value="GO_Central"/>
</dbReference>
<dbReference type="GO" id="GO:0005634">
    <property type="term" value="C:nucleus"/>
    <property type="evidence" value="ECO:0000318"/>
    <property type="project" value="GO_Central"/>
</dbReference>
<dbReference type="GO" id="GO:0003682">
    <property type="term" value="F:chromatin binding"/>
    <property type="evidence" value="ECO:0000318"/>
    <property type="project" value="GO_Central"/>
</dbReference>
<dbReference type="GO" id="GO:0042393">
    <property type="term" value="F:histone binding"/>
    <property type="evidence" value="ECO:0000318"/>
    <property type="project" value="GO_Central"/>
</dbReference>
<dbReference type="GO" id="GO:0071480">
    <property type="term" value="P:cellular response to gamma radiation"/>
    <property type="evidence" value="ECO:0000315"/>
    <property type="project" value="UniProtKB"/>
</dbReference>
<dbReference type="GO" id="GO:0006334">
    <property type="term" value="P:nucleosome assembly"/>
    <property type="evidence" value="ECO:0007669"/>
    <property type="project" value="InterPro"/>
</dbReference>
<dbReference type="GO" id="GO:0008284">
    <property type="term" value="P:positive regulation of cell population proliferation"/>
    <property type="evidence" value="ECO:0000314"/>
    <property type="project" value="UniProtKB"/>
</dbReference>
<dbReference type="GO" id="GO:0051897">
    <property type="term" value="P:positive regulation of phosphatidylinositol 3-kinase/protein kinase B signal transduction"/>
    <property type="evidence" value="ECO:0000315"/>
    <property type="project" value="UniProtKB"/>
</dbReference>
<dbReference type="GO" id="GO:0031398">
    <property type="term" value="P:positive regulation of protein ubiquitination"/>
    <property type="evidence" value="ECO:0000314"/>
    <property type="project" value="UniProtKB"/>
</dbReference>
<dbReference type="FunFam" id="3.30.1120.90:FF:000002">
    <property type="entry name" value="Testis-specific Y-encoded-like protein 2"/>
    <property type="match status" value="1"/>
</dbReference>
<dbReference type="FunFam" id="1.20.5.1500:FF:000008">
    <property type="entry name" value="Testis-specific Y-encoded-like protein 5"/>
    <property type="match status" value="1"/>
</dbReference>
<dbReference type="Gene3D" id="1.20.5.1500">
    <property type="match status" value="1"/>
</dbReference>
<dbReference type="Gene3D" id="3.30.1120.90">
    <property type="entry name" value="Nucleosome assembly protein"/>
    <property type="match status" value="1"/>
</dbReference>
<dbReference type="InterPro" id="IPR037231">
    <property type="entry name" value="NAP-like_sf"/>
</dbReference>
<dbReference type="InterPro" id="IPR002164">
    <property type="entry name" value="NAP_family"/>
</dbReference>
<dbReference type="PANTHER" id="PTHR11875">
    <property type="entry name" value="TESTIS-SPECIFIC Y-ENCODED PROTEIN"/>
    <property type="match status" value="1"/>
</dbReference>
<dbReference type="Pfam" id="PF00956">
    <property type="entry name" value="NAP"/>
    <property type="match status" value="1"/>
</dbReference>
<dbReference type="SUPFAM" id="SSF143113">
    <property type="entry name" value="NAP-like"/>
    <property type="match status" value="1"/>
</dbReference>
<comment type="function">
    <text evidence="3 4">Involved in modulation of cell growth and cellular response to gamma radiation probably via regulation of the Akt signaling pathway. Involved in regulation of p53/TP53. Suppresses p53/TP53 protein levels and promotes its ubiquitination; the function is dependent on USP7 and independent on MDM2. Proposed to displace p53/TP53 from interaction with USP7.</text>
</comment>
<comment type="subunit">
    <text evidence="4">Interacts with USP7.</text>
</comment>
<comment type="interaction">
    <interactant intactId="EBI-3436472">
        <id>Q86VY4</id>
    </interactant>
    <interactant intactId="EBI-302474">
        <id>Q93009</id>
        <label>USP7</label>
    </interactant>
    <organismsDiffer>false</organismsDiffer>
    <experiments>4</experiments>
</comment>
<comment type="similarity">
    <text evidence="5">Belongs to the nucleosome assembly protein (NAP) family.</text>
</comment>
<comment type="sequence caution" evidence="5">
    <conflict type="erroneous initiation">
        <sequence resource="EMBL-CDS" id="BAB21841"/>
    </conflict>
    <text>Extended N-terminus.</text>
</comment>